<comment type="function">
    <text evidence="1">Involved in nonsense-mediated decay (NMD) of mRNAs containing premature stop codons. Probable component of kinase complex containing nonC and recruited to stalled ribosomes (By similarity).</text>
</comment>
<comment type="similarity">
    <text evidence="4">Belongs to the SMG8 family.</text>
</comment>
<proteinExistence type="inferred from homology"/>
<sequence length="945" mass="107543">MSFRKYYSWKYPDVPEDVAPLLLELKNSLVVVGVVGRSKCSLANKMSVFGMQPEETHEPANGQIMCYYKPGTSTLLLHFESTHDEVVLGQKLLEQTSIDFDHFYGNMRSQFVRMMLLALHTCHIVVYVETGQTFDPALVTICQLLKYVREQHLLEFLPQLLRETSAGNLLGDRARLCTPRILFIFENYPADVEKTREFISTHEFQTEDKIYELFRQYNIVMQSASNSLLALPNNKQFVFYNANEILRPDRLLLAIDALNATMYKQDVKEEEEDLEIIALAPFEGFVKPFGDAYTVRKSDEQLYRESHTVWHFLQRHVQDALEGCFDEGSFKQLSQSPPFQLLNFKTWHMCMVSIHKLLVGNVEDVNYVSTNAHYQAYLRDFTESLNYEKRFWYHLSELGLKKGISAYKHSAAVTYGSAAHKQMLANATLVFEEEGRGPYAELALAKLNDVCLRYWHDGRQQCEFPSLRGNPCILPRDVSHDKHSSGVVHISSCNCGRTLGRREDPYTLRQANYDYYEHMAVMCNLCVKVKRFQFPVFTPSISDYRAAAFEAAFPLLLQAHKNRAEPQVEEDSDQEANAAEEPYSQPATEAEPEPEKEPQASANEWSQPMSATYGSDLNMSIAGFGVSLKEGGAEAEVEEAEVCDKGSQDNSTSSDTSTESEIELQPKERSAQKANQILISTTEYLPGLVHMCSGLELLPLFPSWSLACVGPSSIYSHNTGLQEHFQSGFLSGANYLLPWDVQVRLVQPHYKHQQQQLMGKKNQRYRKQGDRLALKIFIGFEYECSRGHRFMMRSPERVLRGGADIERDTSTKVINNNMPLYFPCPCRAQNTFLAQLMRIHVVTPKAPVNIILDPKVLVGKYTFTLGCSILPMLSQSAYWILRLPYVYQGDNEIIAPPEKIEPTNRLAGGCILAGLFGIAETESMELKEPRITSMTFTRLQSHAYK</sequence>
<dbReference type="EMBL" id="CH916368">
    <property type="protein sequence ID" value="EDW03572.1"/>
    <property type="molecule type" value="Genomic_DNA"/>
</dbReference>
<dbReference type="RefSeq" id="XP_001988705.1">
    <property type="nucleotide sequence ID" value="XM_001988669.1"/>
</dbReference>
<dbReference type="SMR" id="B4JE52"/>
<dbReference type="FunCoup" id="B4JE52">
    <property type="interactions" value="2862"/>
</dbReference>
<dbReference type="STRING" id="7222.B4JE52"/>
<dbReference type="eggNOG" id="KOG3692">
    <property type="taxonomic scope" value="Eukaryota"/>
</dbReference>
<dbReference type="HOGENOM" id="CLU_008116_0_0_1"/>
<dbReference type="InParanoid" id="B4JE52"/>
<dbReference type="OMA" id="HVCHIVV"/>
<dbReference type="OrthoDB" id="63589at2759"/>
<dbReference type="PhylomeDB" id="B4JE52"/>
<dbReference type="Proteomes" id="UP000001070">
    <property type="component" value="Unassembled WGS sequence"/>
</dbReference>
<dbReference type="GO" id="GO:0000184">
    <property type="term" value="P:nuclear-transcribed mRNA catabolic process, nonsense-mediated decay"/>
    <property type="evidence" value="ECO:0000250"/>
    <property type="project" value="UniProtKB"/>
</dbReference>
<dbReference type="InterPro" id="IPR019354">
    <property type="entry name" value="SMG8-like"/>
</dbReference>
<dbReference type="PANTHER" id="PTHR13091">
    <property type="entry name" value="AMPLIFIED IN BREAST CANCER 2-RELATED"/>
    <property type="match status" value="1"/>
</dbReference>
<dbReference type="PANTHER" id="PTHR13091:SF0">
    <property type="entry name" value="NONSENSE-MEDIATED MRNA DECAY FACTOR SMG8"/>
    <property type="match status" value="1"/>
</dbReference>
<dbReference type="Pfam" id="PF10220">
    <property type="entry name" value="Smg8_Smg9"/>
    <property type="match status" value="1"/>
</dbReference>
<keyword id="KW-0866">Nonsense-mediated mRNA decay</keyword>
<keyword id="KW-1185">Reference proteome</keyword>
<accession>B4JE52</accession>
<protein>
    <recommendedName>
        <fullName evidence="2">Nonsense-mediated mRNA decay factor SMG8</fullName>
    </recommendedName>
    <alternativeName>
        <fullName>Protein smg-8 homolog</fullName>
    </alternativeName>
</protein>
<evidence type="ECO:0000250" key="1"/>
<evidence type="ECO:0000250" key="2">
    <source>
        <dbReference type="UniProtKB" id="Q8ND04"/>
    </source>
</evidence>
<evidence type="ECO:0000256" key="3">
    <source>
        <dbReference type="SAM" id="MobiDB-lite"/>
    </source>
</evidence>
<evidence type="ECO:0000305" key="4"/>
<organism>
    <name type="scientific">Drosophila grimshawi</name>
    <name type="common">Hawaiian fruit fly</name>
    <name type="synonym">Idiomyia grimshawi</name>
    <dbReference type="NCBI Taxonomy" id="7222"/>
    <lineage>
        <taxon>Eukaryota</taxon>
        <taxon>Metazoa</taxon>
        <taxon>Ecdysozoa</taxon>
        <taxon>Arthropoda</taxon>
        <taxon>Hexapoda</taxon>
        <taxon>Insecta</taxon>
        <taxon>Pterygota</taxon>
        <taxon>Neoptera</taxon>
        <taxon>Endopterygota</taxon>
        <taxon>Diptera</taxon>
        <taxon>Brachycera</taxon>
        <taxon>Muscomorpha</taxon>
        <taxon>Ephydroidea</taxon>
        <taxon>Drosophilidae</taxon>
        <taxon>Drosophila</taxon>
        <taxon>Hawaiian Drosophila</taxon>
    </lineage>
</organism>
<feature type="chain" id="PRO_0000378174" description="Nonsense-mediated mRNA decay factor SMG8">
    <location>
        <begin position="1"/>
        <end position="945"/>
    </location>
</feature>
<feature type="region of interest" description="Disordered" evidence="3">
    <location>
        <begin position="563"/>
        <end position="604"/>
    </location>
</feature>
<feature type="region of interest" description="Disordered" evidence="3">
    <location>
        <begin position="633"/>
        <end position="671"/>
    </location>
</feature>
<gene>
    <name type="ORF">GH11308</name>
</gene>
<reference key="1">
    <citation type="journal article" date="2007" name="Nature">
        <title>Evolution of genes and genomes on the Drosophila phylogeny.</title>
        <authorList>
            <consortium name="Drosophila 12 genomes consortium"/>
        </authorList>
    </citation>
    <scope>NUCLEOTIDE SEQUENCE [LARGE SCALE GENOMIC DNA]</scope>
    <source>
        <strain>Tucson 15287-2541.00</strain>
    </source>
</reference>
<name>SMG8_DROGR</name>